<accession>B2HCT1</accession>
<organism>
    <name type="scientific">Mycobacterium marinum (strain ATCC BAA-535 / M)</name>
    <dbReference type="NCBI Taxonomy" id="216594"/>
    <lineage>
        <taxon>Bacteria</taxon>
        <taxon>Bacillati</taxon>
        <taxon>Actinomycetota</taxon>
        <taxon>Actinomycetes</taxon>
        <taxon>Mycobacteriales</taxon>
        <taxon>Mycobacteriaceae</taxon>
        <taxon>Mycobacterium</taxon>
        <taxon>Mycobacterium ulcerans group</taxon>
    </lineage>
</organism>
<evidence type="ECO:0000255" key="1">
    <source>
        <dbReference type="HAMAP-Rule" id="MF_01367"/>
    </source>
</evidence>
<evidence type="ECO:0000305" key="2"/>
<sequence length="122" mass="13442">MIQQESRLKVADNTGAKEILCIRVLGGSSRRYAGIGDIIVATVKDAIPGGNVKRGDVVKAVVVRTVKERRRPDGSYIKFDENAAVIIKPDNDPRGTRIFGPVGRELREKRFMKIISLAPEVL</sequence>
<keyword id="KW-1185">Reference proteome</keyword>
<keyword id="KW-0687">Ribonucleoprotein</keyword>
<keyword id="KW-0689">Ribosomal protein</keyword>
<keyword id="KW-0694">RNA-binding</keyword>
<keyword id="KW-0699">rRNA-binding</keyword>
<reference key="1">
    <citation type="journal article" date="2008" name="Genome Res.">
        <title>Insights from the complete genome sequence of Mycobacterium marinum on the evolution of Mycobacterium tuberculosis.</title>
        <authorList>
            <person name="Stinear T.P."/>
            <person name="Seemann T."/>
            <person name="Harrison P.F."/>
            <person name="Jenkin G.A."/>
            <person name="Davies J.K."/>
            <person name="Johnson P.D."/>
            <person name="Abdellah Z."/>
            <person name="Arrowsmith C."/>
            <person name="Chillingworth T."/>
            <person name="Churcher C."/>
            <person name="Clarke K."/>
            <person name="Cronin A."/>
            <person name="Davis P."/>
            <person name="Goodhead I."/>
            <person name="Holroyd N."/>
            <person name="Jagels K."/>
            <person name="Lord A."/>
            <person name="Moule S."/>
            <person name="Mungall K."/>
            <person name="Norbertczak H."/>
            <person name="Quail M.A."/>
            <person name="Rabbinowitsch E."/>
            <person name="Walker D."/>
            <person name="White B."/>
            <person name="Whitehead S."/>
            <person name="Small P.L."/>
            <person name="Brosch R."/>
            <person name="Ramakrishnan L."/>
            <person name="Fischbach M.A."/>
            <person name="Parkhill J."/>
            <person name="Cole S.T."/>
        </authorList>
    </citation>
    <scope>NUCLEOTIDE SEQUENCE [LARGE SCALE GENOMIC DNA]</scope>
    <source>
        <strain>ATCC BAA-535 / M</strain>
    </source>
</reference>
<dbReference type="EMBL" id="CP000854">
    <property type="protein sequence ID" value="ACC39503.1"/>
    <property type="molecule type" value="Genomic_DNA"/>
</dbReference>
<dbReference type="RefSeq" id="WP_012392948.1">
    <property type="nucleotide sequence ID" value="NC_010612.1"/>
</dbReference>
<dbReference type="SMR" id="B2HCT1"/>
<dbReference type="STRING" id="216594.MMAR_1045"/>
<dbReference type="GeneID" id="34340420"/>
<dbReference type="GeneID" id="93438587"/>
<dbReference type="KEGG" id="mmi:MMAR_1045"/>
<dbReference type="eggNOG" id="COG0093">
    <property type="taxonomic scope" value="Bacteria"/>
</dbReference>
<dbReference type="HOGENOM" id="CLU_095071_2_1_11"/>
<dbReference type="OrthoDB" id="9806379at2"/>
<dbReference type="Proteomes" id="UP000001190">
    <property type="component" value="Chromosome"/>
</dbReference>
<dbReference type="GO" id="GO:0022625">
    <property type="term" value="C:cytosolic large ribosomal subunit"/>
    <property type="evidence" value="ECO:0007669"/>
    <property type="project" value="TreeGrafter"/>
</dbReference>
<dbReference type="GO" id="GO:0070180">
    <property type="term" value="F:large ribosomal subunit rRNA binding"/>
    <property type="evidence" value="ECO:0007669"/>
    <property type="project" value="TreeGrafter"/>
</dbReference>
<dbReference type="GO" id="GO:0003735">
    <property type="term" value="F:structural constituent of ribosome"/>
    <property type="evidence" value="ECO:0007669"/>
    <property type="project" value="InterPro"/>
</dbReference>
<dbReference type="GO" id="GO:0006412">
    <property type="term" value="P:translation"/>
    <property type="evidence" value="ECO:0007669"/>
    <property type="project" value="UniProtKB-UniRule"/>
</dbReference>
<dbReference type="CDD" id="cd00337">
    <property type="entry name" value="Ribosomal_uL14"/>
    <property type="match status" value="1"/>
</dbReference>
<dbReference type="FunFam" id="2.40.150.20:FF:000001">
    <property type="entry name" value="50S ribosomal protein L14"/>
    <property type="match status" value="1"/>
</dbReference>
<dbReference type="Gene3D" id="2.40.150.20">
    <property type="entry name" value="Ribosomal protein L14"/>
    <property type="match status" value="1"/>
</dbReference>
<dbReference type="HAMAP" id="MF_01367">
    <property type="entry name" value="Ribosomal_uL14"/>
    <property type="match status" value="1"/>
</dbReference>
<dbReference type="InterPro" id="IPR000218">
    <property type="entry name" value="Ribosomal_uL14"/>
</dbReference>
<dbReference type="InterPro" id="IPR005745">
    <property type="entry name" value="Ribosomal_uL14_bac-type"/>
</dbReference>
<dbReference type="InterPro" id="IPR019972">
    <property type="entry name" value="Ribosomal_uL14_CS"/>
</dbReference>
<dbReference type="InterPro" id="IPR036853">
    <property type="entry name" value="Ribosomal_uL14_sf"/>
</dbReference>
<dbReference type="NCBIfam" id="TIGR01067">
    <property type="entry name" value="rplN_bact"/>
    <property type="match status" value="1"/>
</dbReference>
<dbReference type="PANTHER" id="PTHR11761">
    <property type="entry name" value="50S/60S RIBOSOMAL PROTEIN L14/L23"/>
    <property type="match status" value="1"/>
</dbReference>
<dbReference type="PANTHER" id="PTHR11761:SF3">
    <property type="entry name" value="LARGE RIBOSOMAL SUBUNIT PROTEIN UL14M"/>
    <property type="match status" value="1"/>
</dbReference>
<dbReference type="Pfam" id="PF00238">
    <property type="entry name" value="Ribosomal_L14"/>
    <property type="match status" value="1"/>
</dbReference>
<dbReference type="SMART" id="SM01374">
    <property type="entry name" value="Ribosomal_L14"/>
    <property type="match status" value="1"/>
</dbReference>
<dbReference type="SUPFAM" id="SSF50193">
    <property type="entry name" value="Ribosomal protein L14"/>
    <property type="match status" value="1"/>
</dbReference>
<dbReference type="PROSITE" id="PS00049">
    <property type="entry name" value="RIBOSOMAL_L14"/>
    <property type="match status" value="1"/>
</dbReference>
<proteinExistence type="inferred from homology"/>
<gene>
    <name evidence="1" type="primary">rplN</name>
    <name type="ordered locus">MMAR_1045</name>
</gene>
<name>RL14_MYCMM</name>
<comment type="function">
    <text evidence="1">Binds to 23S rRNA. Forms part of two intersubunit bridges in the 70S ribosome.</text>
</comment>
<comment type="subunit">
    <text evidence="1">Part of the 50S ribosomal subunit. Forms a cluster with proteins L3 and L19. In the 70S ribosome, L14 and L19 interact and together make contacts with the 16S rRNA in bridges B5 and B8.</text>
</comment>
<comment type="similarity">
    <text evidence="1">Belongs to the universal ribosomal protein uL14 family.</text>
</comment>
<feature type="chain" id="PRO_1000144301" description="Large ribosomal subunit protein uL14">
    <location>
        <begin position="1"/>
        <end position="122"/>
    </location>
</feature>
<protein>
    <recommendedName>
        <fullName evidence="1">Large ribosomal subunit protein uL14</fullName>
    </recommendedName>
    <alternativeName>
        <fullName evidence="2">50S ribosomal protein L14</fullName>
    </alternativeName>
</protein>